<proteinExistence type="inferred from homology"/>
<protein>
    <recommendedName>
        <fullName evidence="1">Uracil phosphoribosyltransferase</fullName>
        <ecNumber evidence="1">2.4.2.9</ecNumber>
    </recommendedName>
    <alternativeName>
        <fullName evidence="1">UMP pyrophosphorylase</fullName>
    </alternativeName>
    <alternativeName>
        <fullName evidence="1">UPRTase</fullName>
    </alternativeName>
</protein>
<reference key="1">
    <citation type="journal article" date="2008" name="PLoS Genet.">
        <title>Complete genome sequence of the N2-fixing broad host range endophyte Klebsiella pneumoniae 342 and virulence predictions verified in mice.</title>
        <authorList>
            <person name="Fouts D.E."/>
            <person name="Tyler H.L."/>
            <person name="DeBoy R.T."/>
            <person name="Daugherty S."/>
            <person name="Ren Q."/>
            <person name="Badger J.H."/>
            <person name="Durkin A.S."/>
            <person name="Huot H."/>
            <person name="Shrivastava S."/>
            <person name="Kothari S."/>
            <person name="Dodson R.J."/>
            <person name="Mohamoud Y."/>
            <person name="Khouri H."/>
            <person name="Roesch L.F.W."/>
            <person name="Krogfelt K.A."/>
            <person name="Struve C."/>
            <person name="Triplett E.W."/>
            <person name="Methe B.A."/>
        </authorList>
    </citation>
    <scope>NUCLEOTIDE SEQUENCE [LARGE SCALE GENOMIC DNA]</scope>
    <source>
        <strain>342</strain>
    </source>
</reference>
<gene>
    <name evidence="1" type="primary">upp</name>
    <name type="ordered locus">KPK_1314</name>
</gene>
<comment type="function">
    <text evidence="1">Catalyzes the conversion of uracil and 5-phospho-alpha-D-ribose 1-diphosphate (PRPP) to UMP and diphosphate.</text>
</comment>
<comment type="catalytic activity">
    <reaction evidence="1">
        <text>UMP + diphosphate = 5-phospho-alpha-D-ribose 1-diphosphate + uracil</text>
        <dbReference type="Rhea" id="RHEA:13017"/>
        <dbReference type="ChEBI" id="CHEBI:17568"/>
        <dbReference type="ChEBI" id="CHEBI:33019"/>
        <dbReference type="ChEBI" id="CHEBI:57865"/>
        <dbReference type="ChEBI" id="CHEBI:58017"/>
        <dbReference type="EC" id="2.4.2.9"/>
    </reaction>
</comment>
<comment type="cofactor">
    <cofactor evidence="1">
        <name>Mg(2+)</name>
        <dbReference type="ChEBI" id="CHEBI:18420"/>
    </cofactor>
    <text evidence="1">Binds 1 Mg(2+) ion per subunit. The magnesium is bound as Mg-PRPP.</text>
</comment>
<comment type="activity regulation">
    <text evidence="1">Allosterically activated by GTP.</text>
</comment>
<comment type="pathway">
    <text evidence="1">Pyrimidine metabolism; UMP biosynthesis via salvage pathway; UMP from uracil: step 1/1.</text>
</comment>
<comment type="similarity">
    <text evidence="1">Belongs to the UPRTase family.</text>
</comment>
<dbReference type="EC" id="2.4.2.9" evidence="1"/>
<dbReference type="EMBL" id="CP000964">
    <property type="protein sequence ID" value="ACI09578.1"/>
    <property type="molecule type" value="Genomic_DNA"/>
</dbReference>
<dbReference type="SMR" id="B5XNQ4"/>
<dbReference type="KEGG" id="kpe:KPK_1314"/>
<dbReference type="HOGENOM" id="CLU_067096_2_2_6"/>
<dbReference type="UniPathway" id="UPA00574">
    <property type="reaction ID" value="UER00636"/>
</dbReference>
<dbReference type="Proteomes" id="UP000001734">
    <property type="component" value="Chromosome"/>
</dbReference>
<dbReference type="GO" id="GO:0005525">
    <property type="term" value="F:GTP binding"/>
    <property type="evidence" value="ECO:0007669"/>
    <property type="project" value="UniProtKB-KW"/>
</dbReference>
<dbReference type="GO" id="GO:0000287">
    <property type="term" value="F:magnesium ion binding"/>
    <property type="evidence" value="ECO:0007669"/>
    <property type="project" value="UniProtKB-UniRule"/>
</dbReference>
<dbReference type="GO" id="GO:0004845">
    <property type="term" value="F:uracil phosphoribosyltransferase activity"/>
    <property type="evidence" value="ECO:0007669"/>
    <property type="project" value="UniProtKB-UniRule"/>
</dbReference>
<dbReference type="GO" id="GO:0044206">
    <property type="term" value="P:UMP salvage"/>
    <property type="evidence" value="ECO:0007669"/>
    <property type="project" value="UniProtKB-UniRule"/>
</dbReference>
<dbReference type="GO" id="GO:0006223">
    <property type="term" value="P:uracil salvage"/>
    <property type="evidence" value="ECO:0007669"/>
    <property type="project" value="InterPro"/>
</dbReference>
<dbReference type="CDD" id="cd06223">
    <property type="entry name" value="PRTases_typeI"/>
    <property type="match status" value="1"/>
</dbReference>
<dbReference type="FunFam" id="3.40.50.2020:FF:000003">
    <property type="entry name" value="Uracil phosphoribosyltransferase"/>
    <property type="match status" value="1"/>
</dbReference>
<dbReference type="Gene3D" id="3.40.50.2020">
    <property type="match status" value="1"/>
</dbReference>
<dbReference type="HAMAP" id="MF_01218_B">
    <property type="entry name" value="Upp_B"/>
    <property type="match status" value="1"/>
</dbReference>
<dbReference type="InterPro" id="IPR000836">
    <property type="entry name" value="PRibTrfase_dom"/>
</dbReference>
<dbReference type="InterPro" id="IPR029057">
    <property type="entry name" value="PRTase-like"/>
</dbReference>
<dbReference type="InterPro" id="IPR034332">
    <property type="entry name" value="Upp_B"/>
</dbReference>
<dbReference type="InterPro" id="IPR050054">
    <property type="entry name" value="UPRTase/APRTase"/>
</dbReference>
<dbReference type="InterPro" id="IPR005765">
    <property type="entry name" value="Ura_phspho_trans"/>
</dbReference>
<dbReference type="NCBIfam" id="NF001097">
    <property type="entry name" value="PRK00129.1"/>
    <property type="match status" value="1"/>
</dbReference>
<dbReference type="NCBIfam" id="TIGR01091">
    <property type="entry name" value="upp"/>
    <property type="match status" value="1"/>
</dbReference>
<dbReference type="PANTHER" id="PTHR32315">
    <property type="entry name" value="ADENINE PHOSPHORIBOSYLTRANSFERASE"/>
    <property type="match status" value="1"/>
</dbReference>
<dbReference type="PANTHER" id="PTHR32315:SF4">
    <property type="entry name" value="URACIL PHOSPHORIBOSYLTRANSFERASE, CHLOROPLASTIC"/>
    <property type="match status" value="1"/>
</dbReference>
<dbReference type="Pfam" id="PF14681">
    <property type="entry name" value="UPRTase"/>
    <property type="match status" value="1"/>
</dbReference>
<dbReference type="SUPFAM" id="SSF53271">
    <property type="entry name" value="PRTase-like"/>
    <property type="match status" value="1"/>
</dbReference>
<keyword id="KW-0021">Allosteric enzyme</keyword>
<keyword id="KW-0328">Glycosyltransferase</keyword>
<keyword id="KW-0342">GTP-binding</keyword>
<keyword id="KW-0460">Magnesium</keyword>
<keyword id="KW-0547">Nucleotide-binding</keyword>
<keyword id="KW-0808">Transferase</keyword>
<sequence length="208" mass="22507">MKIVEVKHPLVKHKLGLMREHDISTKRFRELASEVGSLLTYEATADLATEKVTIEGWNGPVEVEQIKGKKITVVPILRAGLGMMEGVLEHVPSARISVVGIYRNEETLEPVPYFQKLVSNIDERMALVVDPMLATGGSMIATIDLLKNAGCTSIKVLVLVAAPEGIAALEKAHPDVELYTASVDKGLNEHGYIIPGLGDAGDKIFGTK</sequence>
<name>UPP_KLEP3</name>
<feature type="chain" id="PRO_1000139134" description="Uracil phosphoribosyltransferase">
    <location>
        <begin position="1"/>
        <end position="208"/>
    </location>
</feature>
<feature type="binding site" evidence="1">
    <location>
        <position position="78"/>
    </location>
    <ligand>
        <name>5-phospho-alpha-D-ribose 1-diphosphate</name>
        <dbReference type="ChEBI" id="CHEBI:58017"/>
    </ligand>
</feature>
<feature type="binding site" evidence="1">
    <location>
        <position position="103"/>
    </location>
    <ligand>
        <name>5-phospho-alpha-D-ribose 1-diphosphate</name>
        <dbReference type="ChEBI" id="CHEBI:58017"/>
    </ligand>
</feature>
<feature type="binding site" evidence="1">
    <location>
        <begin position="130"/>
        <end position="138"/>
    </location>
    <ligand>
        <name>5-phospho-alpha-D-ribose 1-diphosphate</name>
        <dbReference type="ChEBI" id="CHEBI:58017"/>
    </ligand>
</feature>
<feature type="binding site" evidence="1">
    <location>
        <position position="193"/>
    </location>
    <ligand>
        <name>uracil</name>
        <dbReference type="ChEBI" id="CHEBI:17568"/>
    </ligand>
</feature>
<feature type="binding site" evidence="1">
    <location>
        <begin position="198"/>
        <end position="200"/>
    </location>
    <ligand>
        <name>uracil</name>
        <dbReference type="ChEBI" id="CHEBI:17568"/>
    </ligand>
</feature>
<feature type="binding site" evidence="1">
    <location>
        <position position="199"/>
    </location>
    <ligand>
        <name>5-phospho-alpha-D-ribose 1-diphosphate</name>
        <dbReference type="ChEBI" id="CHEBI:58017"/>
    </ligand>
</feature>
<organism>
    <name type="scientific">Klebsiella pneumoniae (strain 342)</name>
    <dbReference type="NCBI Taxonomy" id="507522"/>
    <lineage>
        <taxon>Bacteria</taxon>
        <taxon>Pseudomonadati</taxon>
        <taxon>Pseudomonadota</taxon>
        <taxon>Gammaproteobacteria</taxon>
        <taxon>Enterobacterales</taxon>
        <taxon>Enterobacteriaceae</taxon>
        <taxon>Klebsiella/Raoultella group</taxon>
        <taxon>Klebsiella</taxon>
        <taxon>Klebsiella pneumoniae complex</taxon>
    </lineage>
</organism>
<evidence type="ECO:0000255" key="1">
    <source>
        <dbReference type="HAMAP-Rule" id="MF_01218"/>
    </source>
</evidence>
<accession>B5XNQ4</accession>